<gene>
    <name evidence="1" type="primary">proB</name>
    <name type="ordered locus">SG0332</name>
</gene>
<reference key="1">
    <citation type="journal article" date="2008" name="Genome Res.">
        <title>Comparative genome analysis of Salmonella enteritidis PT4 and Salmonella gallinarum 287/91 provides insights into evolutionary and host adaptation pathways.</title>
        <authorList>
            <person name="Thomson N.R."/>
            <person name="Clayton D.J."/>
            <person name="Windhorst D."/>
            <person name="Vernikos G."/>
            <person name="Davidson S."/>
            <person name="Churcher C."/>
            <person name="Quail M.A."/>
            <person name="Stevens M."/>
            <person name="Jones M.A."/>
            <person name="Watson M."/>
            <person name="Barron A."/>
            <person name="Layton A."/>
            <person name="Pickard D."/>
            <person name="Kingsley R.A."/>
            <person name="Bignell A."/>
            <person name="Clark L."/>
            <person name="Harris B."/>
            <person name="Ormond D."/>
            <person name="Abdellah Z."/>
            <person name="Brooks K."/>
            <person name="Cherevach I."/>
            <person name="Chillingworth T."/>
            <person name="Woodward J."/>
            <person name="Norberczak H."/>
            <person name="Lord A."/>
            <person name="Arrowsmith C."/>
            <person name="Jagels K."/>
            <person name="Moule S."/>
            <person name="Mungall K."/>
            <person name="Saunders M."/>
            <person name="Whitehead S."/>
            <person name="Chabalgoity J.A."/>
            <person name="Maskell D."/>
            <person name="Humphreys T."/>
            <person name="Roberts M."/>
            <person name="Barrow P.A."/>
            <person name="Dougan G."/>
            <person name="Parkhill J."/>
        </authorList>
    </citation>
    <scope>NUCLEOTIDE SEQUENCE [LARGE SCALE GENOMIC DNA]</scope>
    <source>
        <strain>287/91 / NCTC 13346</strain>
    </source>
</reference>
<organism>
    <name type="scientific">Salmonella gallinarum (strain 287/91 / NCTC 13346)</name>
    <dbReference type="NCBI Taxonomy" id="550538"/>
    <lineage>
        <taxon>Bacteria</taxon>
        <taxon>Pseudomonadati</taxon>
        <taxon>Pseudomonadota</taxon>
        <taxon>Gammaproteobacteria</taxon>
        <taxon>Enterobacterales</taxon>
        <taxon>Enterobacteriaceae</taxon>
        <taxon>Salmonella</taxon>
    </lineage>
</organism>
<name>PROB_SALG2</name>
<evidence type="ECO:0000255" key="1">
    <source>
        <dbReference type="HAMAP-Rule" id="MF_00456"/>
    </source>
</evidence>
<comment type="function">
    <text evidence="1">Catalyzes the transfer of a phosphate group to glutamate to form L-glutamate 5-phosphate.</text>
</comment>
<comment type="catalytic activity">
    <reaction evidence="1">
        <text>L-glutamate + ATP = L-glutamyl 5-phosphate + ADP</text>
        <dbReference type="Rhea" id="RHEA:14877"/>
        <dbReference type="ChEBI" id="CHEBI:29985"/>
        <dbReference type="ChEBI" id="CHEBI:30616"/>
        <dbReference type="ChEBI" id="CHEBI:58274"/>
        <dbReference type="ChEBI" id="CHEBI:456216"/>
        <dbReference type="EC" id="2.7.2.11"/>
    </reaction>
</comment>
<comment type="pathway">
    <text evidence="1">Amino-acid biosynthesis; L-proline biosynthesis; L-glutamate 5-semialdehyde from L-glutamate: step 1/2.</text>
</comment>
<comment type="subcellular location">
    <subcellularLocation>
        <location evidence="1">Cytoplasm</location>
    </subcellularLocation>
</comment>
<comment type="similarity">
    <text evidence="1">Belongs to the glutamate 5-kinase family.</text>
</comment>
<keyword id="KW-0028">Amino-acid biosynthesis</keyword>
<keyword id="KW-0067">ATP-binding</keyword>
<keyword id="KW-0963">Cytoplasm</keyword>
<keyword id="KW-0418">Kinase</keyword>
<keyword id="KW-0547">Nucleotide-binding</keyword>
<keyword id="KW-0641">Proline biosynthesis</keyword>
<keyword id="KW-0808">Transferase</keyword>
<dbReference type="EC" id="2.7.2.11" evidence="1"/>
<dbReference type="EMBL" id="AM933173">
    <property type="protein sequence ID" value="CAR36234.1"/>
    <property type="molecule type" value="Genomic_DNA"/>
</dbReference>
<dbReference type="RefSeq" id="WP_001285275.1">
    <property type="nucleotide sequence ID" value="NC_011274.1"/>
</dbReference>
<dbReference type="SMR" id="B5R5R8"/>
<dbReference type="KEGG" id="seg:SG0332"/>
<dbReference type="HOGENOM" id="CLU_025400_2_0_6"/>
<dbReference type="UniPathway" id="UPA00098">
    <property type="reaction ID" value="UER00359"/>
</dbReference>
<dbReference type="Proteomes" id="UP000008321">
    <property type="component" value="Chromosome"/>
</dbReference>
<dbReference type="GO" id="GO:0005829">
    <property type="term" value="C:cytosol"/>
    <property type="evidence" value="ECO:0007669"/>
    <property type="project" value="TreeGrafter"/>
</dbReference>
<dbReference type="GO" id="GO:0005524">
    <property type="term" value="F:ATP binding"/>
    <property type="evidence" value="ECO:0007669"/>
    <property type="project" value="UniProtKB-KW"/>
</dbReference>
<dbReference type="GO" id="GO:0004349">
    <property type="term" value="F:glutamate 5-kinase activity"/>
    <property type="evidence" value="ECO:0007669"/>
    <property type="project" value="UniProtKB-UniRule"/>
</dbReference>
<dbReference type="GO" id="GO:0003723">
    <property type="term" value="F:RNA binding"/>
    <property type="evidence" value="ECO:0007669"/>
    <property type="project" value="InterPro"/>
</dbReference>
<dbReference type="GO" id="GO:0055129">
    <property type="term" value="P:L-proline biosynthetic process"/>
    <property type="evidence" value="ECO:0007669"/>
    <property type="project" value="UniProtKB-UniRule"/>
</dbReference>
<dbReference type="CDD" id="cd04242">
    <property type="entry name" value="AAK_G5K_ProB"/>
    <property type="match status" value="1"/>
</dbReference>
<dbReference type="CDD" id="cd21157">
    <property type="entry name" value="PUA_G5K"/>
    <property type="match status" value="1"/>
</dbReference>
<dbReference type="FunFam" id="2.30.130.10:FF:000003">
    <property type="entry name" value="Glutamate 5-kinase"/>
    <property type="match status" value="1"/>
</dbReference>
<dbReference type="FunFam" id="3.40.1160.10:FF:000006">
    <property type="entry name" value="Glutamate 5-kinase"/>
    <property type="match status" value="1"/>
</dbReference>
<dbReference type="Gene3D" id="3.40.1160.10">
    <property type="entry name" value="Acetylglutamate kinase-like"/>
    <property type="match status" value="2"/>
</dbReference>
<dbReference type="Gene3D" id="2.30.130.10">
    <property type="entry name" value="PUA domain"/>
    <property type="match status" value="1"/>
</dbReference>
<dbReference type="HAMAP" id="MF_00456">
    <property type="entry name" value="ProB"/>
    <property type="match status" value="1"/>
</dbReference>
<dbReference type="InterPro" id="IPR036393">
    <property type="entry name" value="AceGlu_kinase-like_sf"/>
</dbReference>
<dbReference type="InterPro" id="IPR001048">
    <property type="entry name" value="Asp/Glu/Uridylate_kinase"/>
</dbReference>
<dbReference type="InterPro" id="IPR041739">
    <property type="entry name" value="G5K_ProB"/>
</dbReference>
<dbReference type="InterPro" id="IPR001057">
    <property type="entry name" value="Glu/AcGlu_kinase"/>
</dbReference>
<dbReference type="InterPro" id="IPR011529">
    <property type="entry name" value="Glu_5kinase"/>
</dbReference>
<dbReference type="InterPro" id="IPR005715">
    <property type="entry name" value="Glu_5kinase/COase_Synthase"/>
</dbReference>
<dbReference type="InterPro" id="IPR019797">
    <property type="entry name" value="Glutamate_5-kinase_CS"/>
</dbReference>
<dbReference type="InterPro" id="IPR002478">
    <property type="entry name" value="PUA"/>
</dbReference>
<dbReference type="InterPro" id="IPR015947">
    <property type="entry name" value="PUA-like_sf"/>
</dbReference>
<dbReference type="InterPro" id="IPR036974">
    <property type="entry name" value="PUA_sf"/>
</dbReference>
<dbReference type="NCBIfam" id="TIGR01027">
    <property type="entry name" value="proB"/>
    <property type="match status" value="1"/>
</dbReference>
<dbReference type="PANTHER" id="PTHR43654">
    <property type="entry name" value="GLUTAMATE 5-KINASE"/>
    <property type="match status" value="1"/>
</dbReference>
<dbReference type="PANTHER" id="PTHR43654:SF1">
    <property type="entry name" value="ISOPENTENYL PHOSPHATE KINASE"/>
    <property type="match status" value="1"/>
</dbReference>
<dbReference type="Pfam" id="PF00696">
    <property type="entry name" value="AA_kinase"/>
    <property type="match status" value="1"/>
</dbReference>
<dbReference type="Pfam" id="PF01472">
    <property type="entry name" value="PUA"/>
    <property type="match status" value="1"/>
</dbReference>
<dbReference type="PIRSF" id="PIRSF000729">
    <property type="entry name" value="GK"/>
    <property type="match status" value="1"/>
</dbReference>
<dbReference type="PRINTS" id="PR00474">
    <property type="entry name" value="GLU5KINASE"/>
</dbReference>
<dbReference type="SMART" id="SM00359">
    <property type="entry name" value="PUA"/>
    <property type="match status" value="1"/>
</dbReference>
<dbReference type="SUPFAM" id="SSF53633">
    <property type="entry name" value="Carbamate kinase-like"/>
    <property type="match status" value="1"/>
</dbReference>
<dbReference type="SUPFAM" id="SSF88697">
    <property type="entry name" value="PUA domain-like"/>
    <property type="match status" value="1"/>
</dbReference>
<dbReference type="PROSITE" id="PS00902">
    <property type="entry name" value="GLUTAMATE_5_KINASE"/>
    <property type="match status" value="1"/>
</dbReference>
<dbReference type="PROSITE" id="PS50890">
    <property type="entry name" value="PUA"/>
    <property type="match status" value="1"/>
</dbReference>
<feature type="chain" id="PRO_1000125258" description="Glutamate 5-kinase">
    <location>
        <begin position="1"/>
        <end position="367"/>
    </location>
</feature>
<feature type="domain" description="PUA" evidence="1">
    <location>
        <begin position="275"/>
        <end position="353"/>
    </location>
</feature>
<feature type="binding site" evidence="1">
    <location>
        <position position="10"/>
    </location>
    <ligand>
        <name>ATP</name>
        <dbReference type="ChEBI" id="CHEBI:30616"/>
    </ligand>
</feature>
<feature type="binding site" evidence="1">
    <location>
        <position position="50"/>
    </location>
    <ligand>
        <name>substrate</name>
    </ligand>
</feature>
<feature type="binding site" evidence="1">
    <location>
        <position position="137"/>
    </location>
    <ligand>
        <name>substrate</name>
    </ligand>
</feature>
<feature type="binding site" evidence="1">
    <location>
        <position position="149"/>
    </location>
    <ligand>
        <name>substrate</name>
    </ligand>
</feature>
<feature type="binding site" evidence="1">
    <location>
        <begin position="169"/>
        <end position="170"/>
    </location>
    <ligand>
        <name>ATP</name>
        <dbReference type="ChEBI" id="CHEBI:30616"/>
    </ligand>
</feature>
<feature type="binding site" evidence="1">
    <location>
        <begin position="211"/>
        <end position="217"/>
    </location>
    <ligand>
        <name>ATP</name>
        <dbReference type="ChEBI" id="CHEBI:30616"/>
    </ligand>
</feature>
<protein>
    <recommendedName>
        <fullName evidence="1">Glutamate 5-kinase</fullName>
        <ecNumber evidence="1">2.7.2.11</ecNumber>
    </recommendedName>
    <alternativeName>
        <fullName evidence="1">Gamma-glutamyl kinase</fullName>
        <shortName evidence="1">GK</shortName>
    </alternativeName>
</protein>
<proteinExistence type="inferred from homology"/>
<sequence>MSDSQTLVVKLGTSVLTGGSRRLNRAHIVELVRQCAQLHAAGHRIVIVTSGAIAAGREHLGYPELPATIASKQLLAAVGQSRLIQLWEQLFSIYGIHIGQMLLTRADMEDRERFLNARDTLRALLDNHIVPVINENDAVATAEIKVGDNDNLSALAAILAGADKLLLLTDQQGLFTADPRSNPQAELIKDVYGVDDALRSIAGDSVSGLGTGGMSTKLQAADVACRAGIDTIIASGSKPGVIGDVMEGISVGTRFHAQASPLENRKRWIFGAPPAGEITVDEGATAAMLERGSSLLPKGIKSVTGNFSRGEVIRICNLQGRDIAHGVSRYNSDALRRIAGHHSQQIDAILGYEYGPVAVHRDDMITR</sequence>
<accession>B5R5R8</accession>